<comment type="function">
    <text evidence="3 6">Short-chain dehydrogenase/reductase; part of the gene cluster that mediates the biosynthesis of betaenones, phytotoxic polyketides involved in leaf spot disease in sugar beets (PubMed:25530455). The first step of the pathway is the synthesis of dehydroprobetaenone I by the polyketide synthase bet1 and the enoyl reductase bet3 via condensation of one acetyl-CoA starter unit with 7 malonyl-CoA units and 5 methylations (PubMed:25530455). The C-terminal reductase (R) domain of bet1 catalyzes the reductive release of the polyketide chain (PubMed:25530455). Because bet1 lacks a designated enoylreductase (ER) domain, the required activity is provided the enoyl reductase bet3 (PubMed:25530455). The short-chain dehydrogenase/reductase bet4 then catalyzes reduction of dehydroprobetaenone I to probetaenone I (PubMed:25530455). The cytochrome P450 monooxygenase bet2 catalyzes successive epoxidation, oxidation (resulting from epoxide opening) and hydroxylation to install a tertiary alcohol in the decaline ring to yield betaenone C from dehydroprobetaenone I and betaenone B from probetaenone I (PubMed:25530455). The FAD-linked oxidoreductase (orf1) is probably responsible for the conversion of betaenone C to betaenone A via an intramolecular aldol reaction between C-1 and C-17 to form the bridged tricyclic system in betaenone A (By similarity).</text>
</comment>
<comment type="catalytic activity">
    <reaction evidence="6">
        <text>dehydroprobetaenone I + AH2 = probetaenone I + A</text>
        <dbReference type="Rhea" id="RHEA:61864"/>
        <dbReference type="ChEBI" id="CHEBI:13193"/>
        <dbReference type="ChEBI" id="CHEBI:17499"/>
        <dbReference type="ChEBI" id="CHEBI:145061"/>
        <dbReference type="ChEBI" id="CHEBI:145062"/>
    </reaction>
    <physiologicalReaction direction="left-to-right" evidence="6">
        <dbReference type="Rhea" id="RHEA:61865"/>
    </physiologicalReaction>
</comment>
<comment type="pathway">
    <text evidence="6">Mycotoxin biosynthesis.</text>
</comment>
<comment type="similarity">
    <text evidence="8">Belongs to the short-chain dehydrogenases/reductases (SDR) family.</text>
</comment>
<sequence>MTPAKAPSHAKKPEAGSQPISSMWTQMFPPKPTYTEEHMPDLSGKIYIVTGASSGVGKETSRMLYSKNAKVYMAMRSGAKAAAAMADIQRAVPKSSGALVILPLDLADLSAVKKAAEEFVSLESSLHGLINNAGVQVLDDTNGEARTAQGHEIHIGVNVLGPFLFTQLLRGVLAATAGRAQPDTVRIVWVSSMGTETIGEKGRGLSADYVDYWPLMSPLERYGLSKAGNWLQGAECAKRYAGDGILSFPINPGHLKSELYREGGTLFKLALRPVLFPPAYGSYVELFAALSPTLSTKDSGAWIVPWGRLYPIRSDLLDATKSAAEGGNGHASAFWDWCEEQVKAFL</sequence>
<evidence type="ECO:0000250" key="1">
    <source>
        <dbReference type="UniProtKB" id="L0E2Z4"/>
    </source>
</evidence>
<evidence type="ECO:0000250" key="2">
    <source>
        <dbReference type="UniProtKB" id="O93868"/>
    </source>
</evidence>
<evidence type="ECO:0000250" key="3">
    <source>
        <dbReference type="UniProtKB" id="Q0UK53"/>
    </source>
</evidence>
<evidence type="ECO:0000255" key="4">
    <source>
        <dbReference type="PROSITE-ProRule" id="PRU10001"/>
    </source>
</evidence>
<evidence type="ECO:0000256" key="5">
    <source>
        <dbReference type="SAM" id="MobiDB-lite"/>
    </source>
</evidence>
<evidence type="ECO:0000269" key="6">
    <source>
    </source>
</evidence>
<evidence type="ECO:0000303" key="7">
    <source>
    </source>
</evidence>
<evidence type="ECO:0000305" key="8"/>
<evidence type="ECO:0000305" key="9">
    <source>
    </source>
</evidence>
<gene>
    <name evidence="7" type="primary">bet4</name>
</gene>
<feature type="chain" id="PRO_0000448656" description="Short-chain dehydrogenase/reductase bet4">
    <location>
        <begin position="1"/>
        <end position="346"/>
    </location>
</feature>
<feature type="region of interest" description="Disordered" evidence="5">
    <location>
        <begin position="1"/>
        <end position="35"/>
    </location>
</feature>
<feature type="active site" description="Proton donor" evidence="2">
    <location>
        <position position="191"/>
    </location>
</feature>
<feature type="active site" description="Proton acceptor" evidence="4">
    <location>
        <position position="222"/>
    </location>
</feature>
<feature type="active site" description="Lowers pKa of active site Tyr" evidence="2">
    <location>
        <position position="226"/>
    </location>
</feature>
<feature type="binding site" evidence="1">
    <location>
        <position position="56"/>
    </location>
    <ligand>
        <name>NADP(+)</name>
        <dbReference type="ChEBI" id="CHEBI:58349"/>
    </ligand>
</feature>
<feature type="binding site" evidence="1">
    <location>
        <position position="80"/>
    </location>
    <ligand>
        <name>NADP(+)</name>
        <dbReference type="ChEBI" id="CHEBI:58349"/>
    </ligand>
</feature>
<feature type="binding site" evidence="1">
    <location>
        <position position="105"/>
    </location>
    <ligand>
        <name>NADP(+)</name>
        <dbReference type="ChEBI" id="CHEBI:58349"/>
    </ligand>
</feature>
<feature type="binding site" evidence="2">
    <location>
        <position position="132"/>
    </location>
    <ligand>
        <name>NADP(+)</name>
        <dbReference type="ChEBI" id="CHEBI:58349"/>
    </ligand>
</feature>
<feature type="binding site" evidence="2">
    <location>
        <position position="222"/>
    </location>
    <ligand>
        <name>NADP(+)</name>
        <dbReference type="ChEBI" id="CHEBI:58349"/>
    </ligand>
</feature>
<feature type="binding site" evidence="2">
    <location>
        <position position="226"/>
    </location>
    <ligand>
        <name>NADP(+)</name>
        <dbReference type="ChEBI" id="CHEBI:58349"/>
    </ligand>
</feature>
<reference key="1">
    <citation type="journal article" date="2015" name="Chem. Commun. (Camb.)">
        <title>Heterologous expression of highly reducing polyketide synthase involved in betaenone biosynthesis.</title>
        <authorList>
            <person name="Ugai T."/>
            <person name="Minami A."/>
            <person name="Fujii R."/>
            <person name="Tanaka M."/>
            <person name="Oguri H."/>
            <person name="Gomi K."/>
            <person name="Oikawa H."/>
        </authorList>
    </citation>
    <scope>NUCLEOTIDE SEQUENCE [GENOMIC DNA]</scope>
    <scope>FUNCTION</scope>
    <scope>CATALYTIC ACTIVITY</scope>
    <scope>PATHWAY</scope>
</reference>
<accession>A0A0C6DRT7</accession>
<name>BET4_NEOBT</name>
<proteinExistence type="evidence at protein level"/>
<protein>
    <recommendedName>
        <fullName evidence="7">Short-chain dehydrogenase/reductase bet4</fullName>
        <ecNumber evidence="9">1.1.1.-</ecNumber>
    </recommendedName>
    <alternativeName>
        <fullName evidence="7">Betaenone biosynthesis cluster protein 4</fullName>
    </alternativeName>
</protein>
<organism>
    <name type="scientific">Neocamarosporium betae</name>
    <name type="common">Beet black rot fungus</name>
    <name type="synonym">Pleospora betae</name>
    <dbReference type="NCBI Taxonomy" id="1979465"/>
    <lineage>
        <taxon>Eukaryota</taxon>
        <taxon>Fungi</taxon>
        <taxon>Dikarya</taxon>
        <taxon>Ascomycota</taxon>
        <taxon>Pezizomycotina</taxon>
        <taxon>Dothideomycetes</taxon>
        <taxon>Pleosporomycetidae</taxon>
        <taxon>Pleosporales</taxon>
        <taxon>Pleosporineae</taxon>
        <taxon>Pleosporaceae</taxon>
        <taxon>Neocamarosporium</taxon>
    </lineage>
</organism>
<keyword id="KW-0521">NADP</keyword>
<keyword id="KW-0560">Oxidoreductase</keyword>
<dbReference type="EC" id="1.1.1.-" evidence="9"/>
<dbReference type="EMBL" id="LC011911">
    <property type="protein sequence ID" value="BAQ25463.1"/>
    <property type="molecule type" value="Genomic_DNA"/>
</dbReference>
<dbReference type="SMR" id="A0A0C6DRT7"/>
<dbReference type="GO" id="GO:0016491">
    <property type="term" value="F:oxidoreductase activity"/>
    <property type="evidence" value="ECO:0007669"/>
    <property type="project" value="UniProtKB-KW"/>
</dbReference>
<dbReference type="Gene3D" id="3.40.50.720">
    <property type="entry name" value="NAD(P)-binding Rossmann-like Domain"/>
    <property type="match status" value="1"/>
</dbReference>
<dbReference type="InterPro" id="IPR036291">
    <property type="entry name" value="NAD(P)-bd_dom_sf"/>
</dbReference>
<dbReference type="InterPro" id="IPR002347">
    <property type="entry name" value="SDR_fam"/>
</dbReference>
<dbReference type="PANTHER" id="PTHR24320">
    <property type="entry name" value="RETINOL DEHYDROGENASE"/>
    <property type="match status" value="1"/>
</dbReference>
<dbReference type="PANTHER" id="PTHR24320:SF236">
    <property type="entry name" value="SHORT-CHAIN DEHYDROGENASE-RELATED"/>
    <property type="match status" value="1"/>
</dbReference>
<dbReference type="Pfam" id="PF00106">
    <property type="entry name" value="adh_short"/>
    <property type="match status" value="1"/>
</dbReference>
<dbReference type="PRINTS" id="PR00081">
    <property type="entry name" value="GDHRDH"/>
</dbReference>
<dbReference type="SUPFAM" id="SSF51735">
    <property type="entry name" value="NAD(P)-binding Rossmann-fold domains"/>
    <property type="match status" value="1"/>
</dbReference>